<dbReference type="EMBL" id="CP000720">
    <property type="protein sequence ID" value="ABS47630.1"/>
    <property type="molecule type" value="Genomic_DNA"/>
</dbReference>
<dbReference type="RefSeq" id="WP_012105991.1">
    <property type="nucleotide sequence ID" value="NC_009708.1"/>
</dbReference>
<dbReference type="SMR" id="A7FPF0"/>
<dbReference type="KEGG" id="ypi:YpsIP31758_4186"/>
<dbReference type="HOGENOM" id="CLU_007831_2_2_6"/>
<dbReference type="Proteomes" id="UP000002412">
    <property type="component" value="Chromosome"/>
</dbReference>
<dbReference type="GO" id="GO:0005829">
    <property type="term" value="C:cytosol"/>
    <property type="evidence" value="ECO:0007669"/>
    <property type="project" value="TreeGrafter"/>
</dbReference>
<dbReference type="GO" id="GO:0050660">
    <property type="term" value="F:flavin adenine dinucleotide binding"/>
    <property type="evidence" value="ECO:0007669"/>
    <property type="project" value="UniProtKB-UniRule"/>
</dbReference>
<dbReference type="GO" id="GO:0030488">
    <property type="term" value="P:tRNA methylation"/>
    <property type="evidence" value="ECO:0007669"/>
    <property type="project" value="TreeGrafter"/>
</dbReference>
<dbReference type="GO" id="GO:0002098">
    <property type="term" value="P:tRNA wobble uridine modification"/>
    <property type="evidence" value="ECO:0007669"/>
    <property type="project" value="InterPro"/>
</dbReference>
<dbReference type="FunFam" id="1.10.10.1800:FF:000001">
    <property type="entry name" value="tRNA uridine 5-carboxymethylaminomethyl modification enzyme MnmG"/>
    <property type="match status" value="1"/>
</dbReference>
<dbReference type="FunFam" id="1.10.150.570:FF:000001">
    <property type="entry name" value="tRNA uridine 5-carboxymethylaminomethyl modification enzyme MnmG"/>
    <property type="match status" value="1"/>
</dbReference>
<dbReference type="FunFam" id="3.50.50.60:FF:000002">
    <property type="entry name" value="tRNA uridine 5-carboxymethylaminomethyl modification enzyme MnmG"/>
    <property type="match status" value="1"/>
</dbReference>
<dbReference type="FunFam" id="3.50.50.60:FF:000010">
    <property type="entry name" value="tRNA uridine 5-carboxymethylaminomethyl modification enzyme MnmG"/>
    <property type="match status" value="1"/>
</dbReference>
<dbReference type="Gene3D" id="3.50.50.60">
    <property type="entry name" value="FAD/NAD(P)-binding domain"/>
    <property type="match status" value="2"/>
</dbReference>
<dbReference type="Gene3D" id="1.10.150.570">
    <property type="entry name" value="GidA associated domain, C-terminal subdomain"/>
    <property type="match status" value="1"/>
</dbReference>
<dbReference type="Gene3D" id="1.10.10.1800">
    <property type="entry name" value="tRNA uridine 5-carboxymethylaminomethyl modification enzyme MnmG/GidA"/>
    <property type="match status" value="1"/>
</dbReference>
<dbReference type="HAMAP" id="MF_00129">
    <property type="entry name" value="MnmG_GidA"/>
    <property type="match status" value="1"/>
</dbReference>
<dbReference type="InterPro" id="IPR036188">
    <property type="entry name" value="FAD/NAD-bd_sf"/>
</dbReference>
<dbReference type="InterPro" id="IPR049312">
    <property type="entry name" value="GIDA_C_N"/>
</dbReference>
<dbReference type="InterPro" id="IPR004416">
    <property type="entry name" value="MnmG"/>
</dbReference>
<dbReference type="InterPro" id="IPR002218">
    <property type="entry name" value="MnmG-rel"/>
</dbReference>
<dbReference type="InterPro" id="IPR020595">
    <property type="entry name" value="MnmG-rel_CS"/>
</dbReference>
<dbReference type="InterPro" id="IPR026904">
    <property type="entry name" value="MnmG_C"/>
</dbReference>
<dbReference type="InterPro" id="IPR047001">
    <property type="entry name" value="MnmG_C_subdom"/>
</dbReference>
<dbReference type="InterPro" id="IPR044920">
    <property type="entry name" value="MnmG_C_subdom_sf"/>
</dbReference>
<dbReference type="InterPro" id="IPR040131">
    <property type="entry name" value="MnmG_N"/>
</dbReference>
<dbReference type="NCBIfam" id="TIGR00136">
    <property type="entry name" value="mnmG_gidA"/>
    <property type="match status" value="1"/>
</dbReference>
<dbReference type="PANTHER" id="PTHR11806">
    <property type="entry name" value="GLUCOSE INHIBITED DIVISION PROTEIN A"/>
    <property type="match status" value="1"/>
</dbReference>
<dbReference type="PANTHER" id="PTHR11806:SF0">
    <property type="entry name" value="PROTEIN MTO1 HOMOLOG, MITOCHONDRIAL"/>
    <property type="match status" value="1"/>
</dbReference>
<dbReference type="Pfam" id="PF01134">
    <property type="entry name" value="GIDA"/>
    <property type="match status" value="1"/>
</dbReference>
<dbReference type="Pfam" id="PF21680">
    <property type="entry name" value="GIDA_C_1st"/>
    <property type="match status" value="1"/>
</dbReference>
<dbReference type="Pfam" id="PF13932">
    <property type="entry name" value="SAM_GIDA_C"/>
    <property type="match status" value="1"/>
</dbReference>
<dbReference type="SMART" id="SM01228">
    <property type="entry name" value="GIDA_assoc_3"/>
    <property type="match status" value="1"/>
</dbReference>
<dbReference type="SUPFAM" id="SSF51905">
    <property type="entry name" value="FAD/NAD(P)-binding domain"/>
    <property type="match status" value="1"/>
</dbReference>
<dbReference type="PROSITE" id="PS01280">
    <property type="entry name" value="GIDA_1"/>
    <property type="match status" value="1"/>
</dbReference>
<dbReference type="PROSITE" id="PS01281">
    <property type="entry name" value="GIDA_2"/>
    <property type="match status" value="1"/>
</dbReference>
<name>MNMG_YERP3</name>
<comment type="function">
    <text evidence="1">NAD-binding protein involved in the addition of a carboxymethylaminomethyl (cmnm) group at the wobble position (U34) of certain tRNAs, forming tRNA-cmnm(5)s(2)U34.</text>
</comment>
<comment type="cofactor">
    <cofactor evidence="1">
        <name>FAD</name>
        <dbReference type="ChEBI" id="CHEBI:57692"/>
    </cofactor>
</comment>
<comment type="subunit">
    <text evidence="1">Homodimer. Heterotetramer of two MnmE and two MnmG subunits.</text>
</comment>
<comment type="subcellular location">
    <subcellularLocation>
        <location evidence="1">Cytoplasm</location>
    </subcellularLocation>
</comment>
<comment type="similarity">
    <text evidence="1">Belongs to the MnmG family.</text>
</comment>
<proteinExistence type="inferred from homology"/>
<organism>
    <name type="scientific">Yersinia pseudotuberculosis serotype O:1b (strain IP 31758)</name>
    <dbReference type="NCBI Taxonomy" id="349747"/>
    <lineage>
        <taxon>Bacteria</taxon>
        <taxon>Pseudomonadati</taxon>
        <taxon>Pseudomonadota</taxon>
        <taxon>Gammaproteobacteria</taxon>
        <taxon>Enterobacterales</taxon>
        <taxon>Yersiniaceae</taxon>
        <taxon>Yersinia</taxon>
    </lineage>
</organism>
<accession>A7FPF0</accession>
<sequence length="629" mass="70070">MFYPDQFDVIIIGGGHAGTEAAMAAARMGRQTLLLTHNIDTLGQMSCNPAIGGIGKGHLVKEIDALGGLMAKATDLAGIQFRILNASKGPAVRATRAQADRVLYRLAVRTALENQPNLMIFQQQVEDLIVENDRVVGAVTQMGLKFRAKAVVLTVGTFLDGKIHIGLENYSGGRAGDPPSISLSQRLRELPLRVNRLKTGTPPRIDARTIDFSQLTPQLGDTPIPVFSFLGNAEQHPEQMACHITYTNEKTHEVIRNNLDRSPMYAGIIEGIGPRYCPSIEDKVMRFADRNSHQIFLEPEGLTSNEIYPNGISTSLPFDVQMQIVRSMKGLENARIIRPGYAIEYDFFDPRDLKPTLESKYIQGLFFAGQINGTTGYEEAAAQGLLAGLNAGRFANEEDGWSPRRDEAYLGVLVDDLSTLGTKEPYRMFTSRAEYRLMLREDNADLRLTETGRKLGLVDDIRWAHFSQKVEQIEKERQRLRDIWVHPHSENVSEINALLKAPLSKEANGEELLRRPEIDYRLLTSLTSFGPALTDPQSADQVEIQVKYEGYITRQQEEIEKQLRNENTLLPVDLDYQQVSGLSNEVIAKLNDHKPSSIGQASRISGITPAAISILLVWLKKQGLLRRSA</sequence>
<reference key="1">
    <citation type="journal article" date="2007" name="PLoS Genet.">
        <title>The complete genome sequence of Yersinia pseudotuberculosis IP31758, the causative agent of Far East scarlet-like fever.</title>
        <authorList>
            <person name="Eppinger M."/>
            <person name="Rosovitz M.J."/>
            <person name="Fricke W.F."/>
            <person name="Rasko D.A."/>
            <person name="Kokorina G."/>
            <person name="Fayolle C."/>
            <person name="Lindler L.E."/>
            <person name="Carniel E."/>
            <person name="Ravel J."/>
        </authorList>
    </citation>
    <scope>NUCLEOTIDE SEQUENCE [LARGE SCALE GENOMIC DNA]</scope>
    <source>
        <strain>IP 31758</strain>
    </source>
</reference>
<gene>
    <name evidence="1" type="primary">mnmG</name>
    <name evidence="1" type="synonym">gidA</name>
    <name type="ordered locus">YpsIP31758_4186</name>
</gene>
<keyword id="KW-0963">Cytoplasm</keyword>
<keyword id="KW-0274">FAD</keyword>
<keyword id="KW-0285">Flavoprotein</keyword>
<keyword id="KW-0520">NAD</keyword>
<keyword id="KW-0819">tRNA processing</keyword>
<protein>
    <recommendedName>
        <fullName evidence="1">tRNA uridine 5-carboxymethylaminomethyl modification enzyme MnmG</fullName>
    </recommendedName>
    <alternativeName>
        <fullName evidence="1">Glucose-inhibited division protein A</fullName>
    </alternativeName>
</protein>
<evidence type="ECO:0000255" key="1">
    <source>
        <dbReference type="HAMAP-Rule" id="MF_00129"/>
    </source>
</evidence>
<feature type="chain" id="PRO_1000057846" description="tRNA uridine 5-carboxymethylaminomethyl modification enzyme MnmG">
    <location>
        <begin position="1"/>
        <end position="629"/>
    </location>
</feature>
<feature type="binding site" evidence="1">
    <location>
        <begin position="13"/>
        <end position="18"/>
    </location>
    <ligand>
        <name>FAD</name>
        <dbReference type="ChEBI" id="CHEBI:57692"/>
    </ligand>
</feature>
<feature type="binding site" evidence="1">
    <location>
        <position position="125"/>
    </location>
    <ligand>
        <name>FAD</name>
        <dbReference type="ChEBI" id="CHEBI:57692"/>
    </ligand>
</feature>
<feature type="binding site" evidence="1">
    <location>
        <position position="180"/>
    </location>
    <ligand>
        <name>FAD</name>
        <dbReference type="ChEBI" id="CHEBI:57692"/>
    </ligand>
</feature>
<feature type="binding site" evidence="1">
    <location>
        <begin position="273"/>
        <end position="287"/>
    </location>
    <ligand>
        <name>NAD(+)</name>
        <dbReference type="ChEBI" id="CHEBI:57540"/>
    </ligand>
</feature>
<feature type="binding site" evidence="1">
    <location>
        <position position="370"/>
    </location>
    <ligand>
        <name>FAD</name>
        <dbReference type="ChEBI" id="CHEBI:57692"/>
    </ligand>
</feature>